<dbReference type="EC" id="3.1.1.96" evidence="1"/>
<dbReference type="EMBL" id="CP000514">
    <property type="protein sequence ID" value="ABM17869.1"/>
    <property type="molecule type" value="Genomic_DNA"/>
</dbReference>
<dbReference type="RefSeq" id="WP_011784291.1">
    <property type="nucleotide sequence ID" value="NC_008740.1"/>
</dbReference>
<dbReference type="SMR" id="A1TYQ0"/>
<dbReference type="STRING" id="351348.Maqu_0772"/>
<dbReference type="KEGG" id="maq:Maqu_0772"/>
<dbReference type="eggNOG" id="COG1490">
    <property type="taxonomic scope" value="Bacteria"/>
</dbReference>
<dbReference type="HOGENOM" id="CLU_076901_1_1_6"/>
<dbReference type="OrthoDB" id="9801395at2"/>
<dbReference type="Proteomes" id="UP000000998">
    <property type="component" value="Chromosome"/>
</dbReference>
<dbReference type="GO" id="GO:0005737">
    <property type="term" value="C:cytoplasm"/>
    <property type="evidence" value="ECO:0007669"/>
    <property type="project" value="UniProtKB-SubCell"/>
</dbReference>
<dbReference type="GO" id="GO:0051500">
    <property type="term" value="F:D-tyrosyl-tRNA(Tyr) deacylase activity"/>
    <property type="evidence" value="ECO:0007669"/>
    <property type="project" value="TreeGrafter"/>
</dbReference>
<dbReference type="GO" id="GO:0106026">
    <property type="term" value="F:Gly-tRNA(Ala) deacylase activity"/>
    <property type="evidence" value="ECO:0007669"/>
    <property type="project" value="UniProtKB-UniRule"/>
</dbReference>
<dbReference type="GO" id="GO:0043908">
    <property type="term" value="F:Ser(Gly)-tRNA(Ala) hydrolase activity"/>
    <property type="evidence" value="ECO:0007669"/>
    <property type="project" value="UniProtKB-UniRule"/>
</dbReference>
<dbReference type="GO" id="GO:0000049">
    <property type="term" value="F:tRNA binding"/>
    <property type="evidence" value="ECO:0007669"/>
    <property type="project" value="UniProtKB-UniRule"/>
</dbReference>
<dbReference type="GO" id="GO:0019478">
    <property type="term" value="P:D-amino acid catabolic process"/>
    <property type="evidence" value="ECO:0007669"/>
    <property type="project" value="UniProtKB-UniRule"/>
</dbReference>
<dbReference type="FunFam" id="3.50.80.10:FF:000001">
    <property type="entry name" value="D-aminoacyl-tRNA deacylase"/>
    <property type="match status" value="1"/>
</dbReference>
<dbReference type="Gene3D" id="3.50.80.10">
    <property type="entry name" value="D-tyrosyl-tRNA(Tyr) deacylase"/>
    <property type="match status" value="1"/>
</dbReference>
<dbReference type="HAMAP" id="MF_00518">
    <property type="entry name" value="Deacylase_Dtd"/>
    <property type="match status" value="1"/>
</dbReference>
<dbReference type="InterPro" id="IPR003732">
    <property type="entry name" value="Daa-tRNA_deacyls_DTD"/>
</dbReference>
<dbReference type="InterPro" id="IPR023509">
    <property type="entry name" value="DTD-like_sf"/>
</dbReference>
<dbReference type="NCBIfam" id="TIGR00256">
    <property type="entry name" value="D-aminoacyl-tRNA deacylase"/>
    <property type="match status" value="1"/>
</dbReference>
<dbReference type="PANTHER" id="PTHR10472:SF5">
    <property type="entry name" value="D-AMINOACYL-TRNA DEACYLASE 1"/>
    <property type="match status" value="1"/>
</dbReference>
<dbReference type="PANTHER" id="PTHR10472">
    <property type="entry name" value="D-TYROSYL-TRNA TYR DEACYLASE"/>
    <property type="match status" value="1"/>
</dbReference>
<dbReference type="Pfam" id="PF02580">
    <property type="entry name" value="Tyr_Deacylase"/>
    <property type="match status" value="1"/>
</dbReference>
<dbReference type="SUPFAM" id="SSF69500">
    <property type="entry name" value="DTD-like"/>
    <property type="match status" value="1"/>
</dbReference>
<name>DTD_MARN8</name>
<evidence type="ECO:0000255" key="1">
    <source>
        <dbReference type="HAMAP-Rule" id="MF_00518"/>
    </source>
</evidence>
<proteinExistence type="inferred from homology"/>
<keyword id="KW-0963">Cytoplasm</keyword>
<keyword id="KW-0378">Hydrolase</keyword>
<keyword id="KW-0694">RNA-binding</keyword>
<keyword id="KW-0820">tRNA-binding</keyword>
<feature type="chain" id="PRO_1000050852" description="D-aminoacyl-tRNA deacylase">
    <location>
        <begin position="1"/>
        <end position="156"/>
    </location>
</feature>
<feature type="short sequence motif" description="Gly-cisPro motif, important for rejection of L-amino acids" evidence="1">
    <location>
        <begin position="139"/>
        <end position="140"/>
    </location>
</feature>
<gene>
    <name evidence="1" type="primary">dtd</name>
    <name type="ordered locus">Maqu_0772</name>
</gene>
<protein>
    <recommendedName>
        <fullName evidence="1">D-aminoacyl-tRNA deacylase</fullName>
        <shortName evidence="1">DTD</shortName>
        <ecNumber evidence="1">3.1.1.96</ecNumber>
    </recommendedName>
    <alternativeName>
        <fullName evidence="1">Gly-tRNA(Ala) deacylase</fullName>
    </alternativeName>
</protein>
<accession>A1TYQ0</accession>
<reference key="1">
    <citation type="journal article" date="2011" name="Appl. Environ. Microbiol.">
        <title>Genomic potential of Marinobacter aquaeolei, a biogeochemical 'opportunitroph'.</title>
        <authorList>
            <person name="Singer E."/>
            <person name="Webb E.A."/>
            <person name="Nelson W.C."/>
            <person name="Heidelberg J.F."/>
            <person name="Ivanova N."/>
            <person name="Pati A."/>
            <person name="Edwards K.J."/>
        </authorList>
    </citation>
    <scope>NUCLEOTIDE SEQUENCE [LARGE SCALE GENOMIC DNA]</scope>
    <source>
        <strain>ATCC 700491 / DSM 11845 / VT8</strain>
    </source>
</reference>
<sequence length="156" mass="16317">MKGLIQRVSEASVAVDGETIARIGPGLLLLLGVERNDTLNEAKELCRKVLSYRVFPDEQGRMNVNVQAAGGSLLVVPQFTLAADTSSGTRPGFSLAAAPELANRLYGDFVAEASGLLGAGRVGTGEFGADMKVALINDGPVTFMLESGQRGSCTKM</sequence>
<organism>
    <name type="scientific">Marinobacter nauticus (strain ATCC 700491 / DSM 11845 / VT8)</name>
    <name type="common">Marinobacter aquaeolei</name>
    <dbReference type="NCBI Taxonomy" id="351348"/>
    <lineage>
        <taxon>Bacteria</taxon>
        <taxon>Pseudomonadati</taxon>
        <taxon>Pseudomonadota</taxon>
        <taxon>Gammaproteobacteria</taxon>
        <taxon>Pseudomonadales</taxon>
        <taxon>Marinobacteraceae</taxon>
        <taxon>Marinobacter</taxon>
    </lineage>
</organism>
<comment type="function">
    <text evidence="1">An aminoacyl-tRNA editing enzyme that deacylates mischarged D-aminoacyl-tRNAs. Also deacylates mischarged glycyl-tRNA(Ala), protecting cells against glycine mischarging by AlaRS. Acts via tRNA-based rather than protein-based catalysis; rejects L-amino acids rather than detecting D-amino acids in the active site. By recycling D-aminoacyl-tRNA to D-amino acids and free tRNA molecules, this enzyme counteracts the toxicity associated with the formation of D-aminoacyl-tRNA entities in vivo and helps enforce protein L-homochirality.</text>
</comment>
<comment type="catalytic activity">
    <reaction evidence="1">
        <text>glycyl-tRNA(Ala) + H2O = tRNA(Ala) + glycine + H(+)</text>
        <dbReference type="Rhea" id="RHEA:53744"/>
        <dbReference type="Rhea" id="RHEA-COMP:9657"/>
        <dbReference type="Rhea" id="RHEA-COMP:13640"/>
        <dbReference type="ChEBI" id="CHEBI:15377"/>
        <dbReference type="ChEBI" id="CHEBI:15378"/>
        <dbReference type="ChEBI" id="CHEBI:57305"/>
        <dbReference type="ChEBI" id="CHEBI:78442"/>
        <dbReference type="ChEBI" id="CHEBI:78522"/>
        <dbReference type="EC" id="3.1.1.96"/>
    </reaction>
</comment>
<comment type="catalytic activity">
    <reaction evidence="1">
        <text>a D-aminoacyl-tRNA + H2O = a tRNA + a D-alpha-amino acid + H(+)</text>
        <dbReference type="Rhea" id="RHEA:13953"/>
        <dbReference type="Rhea" id="RHEA-COMP:10123"/>
        <dbReference type="Rhea" id="RHEA-COMP:10124"/>
        <dbReference type="ChEBI" id="CHEBI:15377"/>
        <dbReference type="ChEBI" id="CHEBI:15378"/>
        <dbReference type="ChEBI" id="CHEBI:59871"/>
        <dbReference type="ChEBI" id="CHEBI:78442"/>
        <dbReference type="ChEBI" id="CHEBI:79333"/>
        <dbReference type="EC" id="3.1.1.96"/>
    </reaction>
</comment>
<comment type="subunit">
    <text evidence="1">Homodimer.</text>
</comment>
<comment type="subcellular location">
    <subcellularLocation>
        <location evidence="1">Cytoplasm</location>
    </subcellularLocation>
</comment>
<comment type="domain">
    <text evidence="1">A Gly-cisPro motif from one monomer fits into the active site of the other monomer to allow specific chiral rejection of L-amino acids.</text>
</comment>
<comment type="similarity">
    <text evidence="1">Belongs to the DTD family.</text>
</comment>